<reference key="1">
    <citation type="journal article" date="2008" name="PLoS Genet.">
        <title>Complete genome sequence of the N2-fixing broad host range endophyte Klebsiella pneumoniae 342 and virulence predictions verified in mice.</title>
        <authorList>
            <person name="Fouts D.E."/>
            <person name="Tyler H.L."/>
            <person name="DeBoy R.T."/>
            <person name="Daugherty S."/>
            <person name="Ren Q."/>
            <person name="Badger J.H."/>
            <person name="Durkin A.S."/>
            <person name="Huot H."/>
            <person name="Shrivastava S."/>
            <person name="Kothari S."/>
            <person name="Dodson R.J."/>
            <person name="Mohamoud Y."/>
            <person name="Khouri H."/>
            <person name="Roesch L.F.W."/>
            <person name="Krogfelt K.A."/>
            <person name="Struve C."/>
            <person name="Triplett E.W."/>
            <person name="Methe B.A."/>
        </authorList>
    </citation>
    <scope>NUCLEOTIDE SEQUENCE [LARGE SCALE GENOMIC DNA]</scope>
    <source>
        <strain>342</strain>
    </source>
</reference>
<feature type="chain" id="PRO_1000120475" description="UPF0149 protein KPK_0755">
    <location>
        <begin position="1"/>
        <end position="192"/>
    </location>
</feature>
<proteinExistence type="inferred from homology"/>
<sequence length="192" mass="21193">MSIQNEMPGYNDVDQLLNQQGVGLTPAEMHGLISGLLCGGNTDSSWLPMVHDLTNEGLAFGHELAQALRNMHSAISDSLDDDGFLFQLYLPEGDAVSVFDRADALAGWVNHFLLGLGVSQPKLDKVKDETGEAIDDLRNIAQLGYDEDEDQEELEMSLEEIIEYVRVAALLCHDTFSRQQPTAPEVRKPTLH</sequence>
<evidence type="ECO:0000255" key="1">
    <source>
        <dbReference type="HAMAP-Rule" id="MF_00346"/>
    </source>
</evidence>
<name>Y755_KLEP3</name>
<gene>
    <name type="ordered locus">KPK_0755</name>
</gene>
<comment type="similarity">
    <text evidence="1">Belongs to the UPF0149 family.</text>
</comment>
<protein>
    <recommendedName>
        <fullName evidence="1">UPF0149 protein KPK_0755</fullName>
    </recommendedName>
</protein>
<dbReference type="EMBL" id="CP000964">
    <property type="protein sequence ID" value="ACI09153.1"/>
    <property type="molecule type" value="Genomic_DNA"/>
</dbReference>
<dbReference type="SMR" id="B5XUC9"/>
<dbReference type="KEGG" id="kpe:KPK_0755"/>
<dbReference type="HOGENOM" id="CLU_085336_1_0_6"/>
<dbReference type="BioCyc" id="KPNE507522:GI0B-755-MONOMER"/>
<dbReference type="Proteomes" id="UP000001734">
    <property type="component" value="Chromosome"/>
</dbReference>
<dbReference type="GO" id="GO:0005829">
    <property type="term" value="C:cytosol"/>
    <property type="evidence" value="ECO:0007669"/>
    <property type="project" value="TreeGrafter"/>
</dbReference>
<dbReference type="FunFam" id="1.20.120.740:FF:000001">
    <property type="entry name" value="UPF0149 protein YgfB"/>
    <property type="match status" value="1"/>
</dbReference>
<dbReference type="Gene3D" id="1.20.120.740">
    <property type="entry name" value="YgfB uncharacterised protein family UPF0149, PF03695"/>
    <property type="match status" value="1"/>
</dbReference>
<dbReference type="HAMAP" id="MF_00346">
    <property type="entry name" value="UPF0149"/>
    <property type="match status" value="1"/>
</dbReference>
<dbReference type="InterPro" id="IPR011978">
    <property type="entry name" value="YgfB-like"/>
</dbReference>
<dbReference type="InterPro" id="IPR036255">
    <property type="entry name" value="YgfB-like_sf"/>
</dbReference>
<dbReference type="NCBIfam" id="NF002477">
    <property type="entry name" value="PRK01736.1"/>
    <property type="match status" value="1"/>
</dbReference>
<dbReference type="NCBIfam" id="TIGR02292">
    <property type="entry name" value="ygfB_yecA"/>
    <property type="match status" value="1"/>
</dbReference>
<dbReference type="PANTHER" id="PTHR37528">
    <property type="entry name" value="UPF0149 PROTEIN YGFB"/>
    <property type="match status" value="1"/>
</dbReference>
<dbReference type="PANTHER" id="PTHR37528:SF1">
    <property type="entry name" value="UPF0149 PROTEIN YGFB"/>
    <property type="match status" value="1"/>
</dbReference>
<dbReference type="Pfam" id="PF03695">
    <property type="entry name" value="UPF0149"/>
    <property type="match status" value="1"/>
</dbReference>
<dbReference type="SUPFAM" id="SSF101327">
    <property type="entry name" value="YgfB-like"/>
    <property type="match status" value="1"/>
</dbReference>
<accession>B5XUC9</accession>
<organism>
    <name type="scientific">Klebsiella pneumoniae (strain 342)</name>
    <dbReference type="NCBI Taxonomy" id="507522"/>
    <lineage>
        <taxon>Bacteria</taxon>
        <taxon>Pseudomonadati</taxon>
        <taxon>Pseudomonadota</taxon>
        <taxon>Gammaproteobacteria</taxon>
        <taxon>Enterobacterales</taxon>
        <taxon>Enterobacteriaceae</taxon>
        <taxon>Klebsiella/Raoultella group</taxon>
        <taxon>Klebsiella</taxon>
        <taxon>Klebsiella pneumoniae complex</taxon>
    </lineage>
</organism>